<evidence type="ECO:0000255" key="1">
    <source>
        <dbReference type="PROSITE-ProRule" id="PRU00448"/>
    </source>
</evidence>
<evidence type="ECO:0000305" key="2"/>
<comment type="function">
    <text>May be involved in the phase-shift of cells from growth to differentiation.</text>
</comment>
<comment type="developmental stage">
    <text>Predominantly expressed in starved cells just before the putative shift point.</text>
</comment>
<name>CAF1_DICDI</name>
<protein>
    <recommendedName>
        <fullName>Calfumirin-1</fullName>
        <shortName>CAF-1</shortName>
    </recommendedName>
</protein>
<accession>P54670</accession>
<accession>Q54YS1</accession>
<gene>
    <name type="primary">cafA</name>
    <name type="synonym">caf-1</name>
    <name type="ORF">DDB_G0277827</name>
</gene>
<reference key="1">
    <citation type="journal article" date="1995" name="Dev. Growth Differ.">
        <title>Specific expression of a gene encoding a novel calcium-binding protein, CAF-1, during transition of Dictyostelium cells from growth to differentiation.</title>
        <authorList>
            <person name="Abe F."/>
            <person name="Maeda Y."/>
        </authorList>
    </citation>
    <scope>NUCLEOTIDE SEQUENCE [MRNA]</scope>
    <source>
        <strain>AX2</strain>
    </source>
</reference>
<reference key="2">
    <citation type="journal article" date="2005" name="Nature">
        <title>The genome of the social amoeba Dictyostelium discoideum.</title>
        <authorList>
            <person name="Eichinger L."/>
            <person name="Pachebat J.A."/>
            <person name="Gloeckner G."/>
            <person name="Rajandream M.A."/>
            <person name="Sucgang R."/>
            <person name="Berriman M."/>
            <person name="Song J."/>
            <person name="Olsen R."/>
            <person name="Szafranski K."/>
            <person name="Xu Q."/>
            <person name="Tunggal B."/>
            <person name="Kummerfeld S."/>
            <person name="Madera M."/>
            <person name="Konfortov B.A."/>
            <person name="Rivero F."/>
            <person name="Bankier A.T."/>
            <person name="Lehmann R."/>
            <person name="Hamlin N."/>
            <person name="Davies R."/>
            <person name="Gaudet P."/>
            <person name="Fey P."/>
            <person name="Pilcher K."/>
            <person name="Chen G."/>
            <person name="Saunders D."/>
            <person name="Sodergren E.J."/>
            <person name="Davis P."/>
            <person name="Kerhornou A."/>
            <person name="Nie X."/>
            <person name="Hall N."/>
            <person name="Anjard C."/>
            <person name="Hemphill L."/>
            <person name="Bason N."/>
            <person name="Farbrother P."/>
            <person name="Desany B."/>
            <person name="Just E."/>
            <person name="Morio T."/>
            <person name="Rost R."/>
            <person name="Churcher C.M."/>
            <person name="Cooper J."/>
            <person name="Haydock S."/>
            <person name="van Driessche N."/>
            <person name="Cronin A."/>
            <person name="Goodhead I."/>
            <person name="Muzny D.M."/>
            <person name="Mourier T."/>
            <person name="Pain A."/>
            <person name="Lu M."/>
            <person name="Harper D."/>
            <person name="Lindsay R."/>
            <person name="Hauser H."/>
            <person name="James K.D."/>
            <person name="Quiles M."/>
            <person name="Madan Babu M."/>
            <person name="Saito T."/>
            <person name="Buchrieser C."/>
            <person name="Wardroper A."/>
            <person name="Felder M."/>
            <person name="Thangavelu M."/>
            <person name="Johnson D."/>
            <person name="Knights A."/>
            <person name="Loulseged H."/>
            <person name="Mungall K.L."/>
            <person name="Oliver K."/>
            <person name="Price C."/>
            <person name="Quail M.A."/>
            <person name="Urushihara H."/>
            <person name="Hernandez J."/>
            <person name="Rabbinowitsch E."/>
            <person name="Steffen D."/>
            <person name="Sanders M."/>
            <person name="Ma J."/>
            <person name="Kohara Y."/>
            <person name="Sharp S."/>
            <person name="Simmonds M.N."/>
            <person name="Spiegler S."/>
            <person name="Tivey A."/>
            <person name="Sugano S."/>
            <person name="White B."/>
            <person name="Walker D."/>
            <person name="Woodward J.R."/>
            <person name="Winckler T."/>
            <person name="Tanaka Y."/>
            <person name="Shaulsky G."/>
            <person name="Schleicher M."/>
            <person name="Weinstock G.M."/>
            <person name="Rosenthal A."/>
            <person name="Cox E.C."/>
            <person name="Chisholm R.L."/>
            <person name="Gibbs R.A."/>
            <person name="Loomis W.F."/>
            <person name="Platzer M."/>
            <person name="Kay R.R."/>
            <person name="Williams J.G."/>
            <person name="Dear P.H."/>
            <person name="Noegel A.A."/>
            <person name="Barrell B.G."/>
            <person name="Kuspa A."/>
        </authorList>
    </citation>
    <scope>NUCLEOTIDE SEQUENCE [LARGE SCALE GENOMIC DNA]</scope>
    <source>
        <strain>AX4</strain>
    </source>
</reference>
<organism>
    <name type="scientific">Dictyostelium discoideum</name>
    <name type="common">Social amoeba</name>
    <dbReference type="NCBI Taxonomy" id="44689"/>
    <lineage>
        <taxon>Eukaryota</taxon>
        <taxon>Amoebozoa</taxon>
        <taxon>Evosea</taxon>
        <taxon>Eumycetozoa</taxon>
        <taxon>Dictyostelia</taxon>
        <taxon>Dictyosteliales</taxon>
        <taxon>Dictyosteliaceae</taxon>
        <taxon>Dictyostelium</taxon>
    </lineage>
</organism>
<keyword id="KW-0106">Calcium</keyword>
<keyword id="KW-0479">Metal-binding</keyword>
<keyword id="KW-1185">Reference proteome</keyword>
<keyword id="KW-0677">Repeat</keyword>
<proteinExistence type="evidence at transcript level"/>
<sequence>MASTQNIVEEVQKMLDTYDTNKDGEITKAEAVEYFKGKKAFNPERSAIYLFQVYDKDNDGKITIKELAGDIDFDKALKEYKEKQAKSKQQEAEVEEDIEAFILRHNKDDNTDITKDELIQGFKETGAKDPEKSANFILTEMDTNKDGTITVKELRVYYQKVQKLLNPDQ</sequence>
<dbReference type="EMBL" id="D29986">
    <property type="protein sequence ID" value="BAA06266.1"/>
    <property type="molecule type" value="mRNA"/>
</dbReference>
<dbReference type="EMBL" id="AAFI02000023">
    <property type="protein sequence ID" value="EAL68086.1"/>
    <property type="molecule type" value="Genomic_DNA"/>
</dbReference>
<dbReference type="RefSeq" id="XP_642131.1">
    <property type="nucleotide sequence ID" value="XM_637039.1"/>
</dbReference>
<dbReference type="SMR" id="P54670"/>
<dbReference type="FunCoup" id="P54670">
    <property type="interactions" value="3"/>
</dbReference>
<dbReference type="STRING" id="44689.P54670"/>
<dbReference type="PaxDb" id="44689-DDB0214954"/>
<dbReference type="EnsemblProtists" id="EAL68086">
    <property type="protein sequence ID" value="EAL68086"/>
    <property type="gene ID" value="DDB_G0277827"/>
</dbReference>
<dbReference type="GeneID" id="8621339"/>
<dbReference type="KEGG" id="ddi:DDB_G0277827"/>
<dbReference type="dictyBase" id="DDB_G0277827">
    <property type="gene designation" value="cafA"/>
</dbReference>
<dbReference type="VEuPathDB" id="AmoebaDB:DDB_G0277827"/>
<dbReference type="HOGENOM" id="CLU_1630084_0_0_1"/>
<dbReference type="InParanoid" id="P54670"/>
<dbReference type="OMA" id="MASTQNI"/>
<dbReference type="PhylomeDB" id="P54670"/>
<dbReference type="PRO" id="PR:P54670"/>
<dbReference type="Proteomes" id="UP000002195">
    <property type="component" value="Chromosome 3"/>
</dbReference>
<dbReference type="GO" id="GO:0005509">
    <property type="term" value="F:calcium ion binding"/>
    <property type="evidence" value="ECO:0007669"/>
    <property type="project" value="InterPro"/>
</dbReference>
<dbReference type="GO" id="GO:0140582">
    <property type="term" value="P:adenylate cyclase-activating G protein-coupled cAMP receptor signaling pathway"/>
    <property type="evidence" value="ECO:0000314"/>
    <property type="project" value="dictyBase"/>
</dbReference>
<dbReference type="GO" id="GO:0009267">
    <property type="term" value="P:cellular response to starvation"/>
    <property type="evidence" value="ECO:0000270"/>
    <property type="project" value="dictyBase"/>
</dbReference>
<dbReference type="GO" id="GO:0140676">
    <property type="term" value="P:oscillatory cAMP signaling"/>
    <property type="evidence" value="ECO:0000314"/>
    <property type="project" value="dictyBase"/>
</dbReference>
<dbReference type="Gene3D" id="1.10.238.10">
    <property type="entry name" value="EF-hand"/>
    <property type="match status" value="2"/>
</dbReference>
<dbReference type="InterPro" id="IPR011992">
    <property type="entry name" value="EF-hand-dom_pair"/>
</dbReference>
<dbReference type="InterPro" id="IPR018247">
    <property type="entry name" value="EF_Hand_1_Ca_BS"/>
</dbReference>
<dbReference type="InterPro" id="IPR002048">
    <property type="entry name" value="EF_hand_dom"/>
</dbReference>
<dbReference type="Pfam" id="PF13202">
    <property type="entry name" value="EF-hand_5"/>
    <property type="match status" value="1"/>
</dbReference>
<dbReference type="Pfam" id="PF13499">
    <property type="entry name" value="EF-hand_7"/>
    <property type="match status" value="1"/>
</dbReference>
<dbReference type="SMART" id="SM00054">
    <property type="entry name" value="EFh"/>
    <property type="match status" value="3"/>
</dbReference>
<dbReference type="SUPFAM" id="SSF47473">
    <property type="entry name" value="EF-hand"/>
    <property type="match status" value="1"/>
</dbReference>
<dbReference type="PROSITE" id="PS00018">
    <property type="entry name" value="EF_HAND_1"/>
    <property type="match status" value="2"/>
</dbReference>
<dbReference type="PROSITE" id="PS50222">
    <property type="entry name" value="EF_HAND_2"/>
    <property type="match status" value="4"/>
</dbReference>
<feature type="chain" id="PRO_0000073853" description="Calfumirin-1">
    <location>
        <begin position="1"/>
        <end position="169"/>
    </location>
</feature>
<feature type="domain" description="EF-hand 1" evidence="1">
    <location>
        <begin position="6"/>
        <end position="41"/>
    </location>
</feature>
<feature type="domain" description="EF-hand 2" evidence="1">
    <location>
        <begin position="42"/>
        <end position="77"/>
    </location>
</feature>
<feature type="domain" description="EF-hand 3" evidence="1">
    <location>
        <begin position="93"/>
        <end position="128"/>
    </location>
</feature>
<feature type="domain" description="EF-hand 4" evidence="1">
    <location>
        <begin position="129"/>
        <end position="164"/>
    </location>
</feature>
<feature type="binding site" evidence="2">
    <location>
        <position position="19"/>
    </location>
    <ligand>
        <name>Ca(2+)</name>
        <dbReference type="ChEBI" id="CHEBI:29108"/>
        <label>1</label>
    </ligand>
</feature>
<feature type="binding site" evidence="2">
    <location>
        <position position="21"/>
    </location>
    <ligand>
        <name>Ca(2+)</name>
        <dbReference type="ChEBI" id="CHEBI:29108"/>
        <label>1</label>
    </ligand>
</feature>
<feature type="binding site" evidence="2">
    <location>
        <position position="23"/>
    </location>
    <ligand>
        <name>Ca(2+)</name>
        <dbReference type="ChEBI" id="CHEBI:29108"/>
        <label>1</label>
    </ligand>
</feature>
<feature type="binding site" evidence="2">
    <location>
        <position position="25"/>
    </location>
    <ligand>
        <name>Ca(2+)</name>
        <dbReference type="ChEBI" id="CHEBI:29108"/>
        <label>1</label>
    </ligand>
</feature>
<feature type="binding site" evidence="2">
    <location>
        <position position="30"/>
    </location>
    <ligand>
        <name>Ca(2+)</name>
        <dbReference type="ChEBI" id="CHEBI:29108"/>
        <label>1</label>
    </ligand>
</feature>
<feature type="binding site" evidence="1">
    <location>
        <position position="55"/>
    </location>
    <ligand>
        <name>Ca(2+)</name>
        <dbReference type="ChEBI" id="CHEBI:29108"/>
        <label>2</label>
    </ligand>
</feature>
<feature type="binding site" evidence="1">
    <location>
        <position position="57"/>
    </location>
    <ligand>
        <name>Ca(2+)</name>
        <dbReference type="ChEBI" id="CHEBI:29108"/>
        <label>2</label>
    </ligand>
</feature>
<feature type="binding site" evidence="1">
    <location>
        <position position="59"/>
    </location>
    <ligand>
        <name>Ca(2+)</name>
        <dbReference type="ChEBI" id="CHEBI:29108"/>
        <label>2</label>
    </ligand>
</feature>
<feature type="binding site" evidence="1">
    <location>
        <position position="61"/>
    </location>
    <ligand>
        <name>Ca(2+)</name>
        <dbReference type="ChEBI" id="CHEBI:29108"/>
        <label>2</label>
    </ligand>
</feature>
<feature type="binding site" evidence="1">
    <location>
        <position position="66"/>
    </location>
    <ligand>
        <name>Ca(2+)</name>
        <dbReference type="ChEBI" id="CHEBI:29108"/>
        <label>2</label>
    </ligand>
</feature>
<feature type="binding site" evidence="2">
    <location>
        <position position="108"/>
    </location>
    <ligand>
        <name>Ca(2+)</name>
        <dbReference type="ChEBI" id="CHEBI:29108"/>
        <label>3</label>
    </ligand>
</feature>
<feature type="binding site" evidence="2">
    <location>
        <position position="110"/>
    </location>
    <ligand>
        <name>Ca(2+)</name>
        <dbReference type="ChEBI" id="CHEBI:29108"/>
        <label>3</label>
    </ligand>
</feature>
<feature type="binding site" evidence="2">
    <location>
        <position position="112"/>
    </location>
    <ligand>
        <name>Ca(2+)</name>
        <dbReference type="ChEBI" id="CHEBI:29108"/>
        <label>3</label>
    </ligand>
</feature>
<feature type="binding site" evidence="2">
    <location>
        <position position="117"/>
    </location>
    <ligand>
        <name>Ca(2+)</name>
        <dbReference type="ChEBI" id="CHEBI:29108"/>
        <label>3</label>
    </ligand>
</feature>
<feature type="binding site" evidence="1">
    <location>
        <position position="142"/>
    </location>
    <ligand>
        <name>Ca(2+)</name>
        <dbReference type="ChEBI" id="CHEBI:29108"/>
        <label>4</label>
    </ligand>
</feature>
<feature type="binding site" evidence="1">
    <location>
        <position position="144"/>
    </location>
    <ligand>
        <name>Ca(2+)</name>
        <dbReference type="ChEBI" id="CHEBI:29108"/>
        <label>4</label>
    </ligand>
</feature>
<feature type="binding site" evidence="1">
    <location>
        <position position="146"/>
    </location>
    <ligand>
        <name>Ca(2+)</name>
        <dbReference type="ChEBI" id="CHEBI:29108"/>
        <label>4</label>
    </ligand>
</feature>
<feature type="binding site" evidence="1">
    <location>
        <position position="148"/>
    </location>
    <ligand>
        <name>Ca(2+)</name>
        <dbReference type="ChEBI" id="CHEBI:29108"/>
        <label>4</label>
    </ligand>
</feature>
<feature type="binding site" evidence="1">
    <location>
        <position position="153"/>
    </location>
    <ligand>
        <name>Ca(2+)</name>
        <dbReference type="ChEBI" id="CHEBI:29108"/>
        <label>4</label>
    </ligand>
</feature>